<name>A2_BPBF2</name>
<sequence length="138" mass="14673">MANVKTEKSAKFAWNEENTQQAVTMYQQLINENGLEFANSDGLKEIAKTVGAASPVSVPSKLTSAKAYQKSDKPRKVGGGSSIRKAHYVRVIAKHAIDSGIIKDADDLASLESAKLETLDAVAQLLGVADEVKQAAGE</sequence>
<feature type="chain" id="PRO_0000165290" description="Protein A2-A3">
    <location>
        <begin position="1"/>
        <end position="138"/>
    </location>
</feature>
<dbReference type="EMBL" id="M37095">
    <property type="protein sequence ID" value="AAA32179.1"/>
    <property type="molecule type" value="Genomic_DNA"/>
</dbReference>
<dbReference type="PIR" id="B46348">
    <property type="entry name" value="B46348"/>
</dbReference>
<dbReference type="GO" id="GO:0003677">
    <property type="term" value="F:DNA binding"/>
    <property type="evidence" value="ECO:0007669"/>
    <property type="project" value="UniProtKB-KW"/>
</dbReference>
<gene>
    <name type="primary">A2-A3</name>
</gene>
<protein>
    <recommendedName>
        <fullName>Protein A2-A3</fullName>
    </recommendedName>
</protein>
<organismHost>
    <name type="scientific">Escherichia coli</name>
    <dbReference type="NCBI Taxonomy" id="562"/>
</organismHost>
<organismHost>
    <name type="scientific">Salmonella typhimurium</name>
    <dbReference type="NCBI Taxonomy" id="90371"/>
</organismHost>
<evidence type="ECO:0000250" key="1">
    <source>
        <dbReference type="UniProtKB" id="P23541"/>
    </source>
</evidence>
<evidence type="ECO:0000305" key="2"/>
<accession>P19348</accession>
<comment type="function">
    <text evidence="1">Involved, together with A1 protein, in the second step transfer (SST) which allows the completion of viral DNA into the host cell.</text>
</comment>
<comment type="subunit">
    <text evidence="1">Interacts with A1 protein; the two proteins form heterooligomers.</text>
</comment>
<comment type="miscellaneous">
    <text evidence="1">This gene is part of the long terminal repeats present at both ends of the viral genome and is thus duplicated.</text>
</comment>
<comment type="similarity">
    <text evidence="2">Belongs to the T5likevirus A2 protein family.</text>
</comment>
<proteinExistence type="inferred from homology"/>
<organism>
    <name type="scientific">Escherichia phage Bf23</name>
    <name type="common">Enterobacteria phage BF23</name>
    <dbReference type="NCBI Taxonomy" id="10707"/>
    <lineage>
        <taxon>Viruses</taxon>
        <taxon>Duplodnaviria</taxon>
        <taxon>Heunggongvirae</taxon>
        <taxon>Uroviricota</taxon>
        <taxon>Caudoviricetes</taxon>
        <taxon>Demerecviridae</taxon>
        <taxon>Markadamsvirinae</taxon>
        <taxon>Tequintavirus</taxon>
    </lineage>
</organism>
<keyword id="KW-0238">DNA-binding</keyword>
<keyword id="KW-0244">Early protein</keyword>
<reference key="1">
    <citation type="journal article" date="1990" name="Virology">
        <title>Characterization of preearly genes in the terminal repetition of bacteriophage BF23 DNA by nucleotide sequencing and restriction mapping.</title>
        <authorList>
            <person name="Wiest J.S."/>
            <person name="McCorquodale D.J."/>
        </authorList>
    </citation>
    <scope>NUCLEOTIDE SEQUENCE [GENOMIC DNA]</scope>
    <source>
        <strain>Wild-type</strain>
    </source>
</reference>
<reference key="2">
    <citation type="journal article" date="1991" name="Virology">
        <title>Characterization of preearly genes in the terminal repetition of bacteriophage BF23 DNA by nucleotide sequencing and restriction mapping.</title>
        <authorList>
            <person name="Wiest J.S."/>
            <person name="McCorquodale D.J."/>
        </authorList>
    </citation>
    <scope>SEQUENCE REVISION</scope>
</reference>